<proteinExistence type="evidence at protein level"/>
<feature type="signal peptide" evidence="3 4 5 6">
    <location>
        <begin position="1"/>
        <end position="24"/>
    </location>
</feature>
<feature type="chain" id="PRO_0000011652" description="Glycoprotein hormones alpha chain">
    <location>
        <begin position="25"/>
        <end position="120"/>
    </location>
</feature>
<feature type="chain" id="PRO_0000011653" description="LH alpha 1-1">
    <location>
        <begin position="28"/>
        <end position="120"/>
    </location>
</feature>
<feature type="chain" id="PRO_0000011654" description="LH alpha 1-2">
    <location>
        <begin position="30"/>
        <end position="120"/>
    </location>
</feature>
<feature type="chain" id="PRO_0000011655" description="LH alpha 1-3">
    <location>
        <begin position="31"/>
        <end position="120"/>
    </location>
</feature>
<feature type="glycosylation site" id="CAR_000038" description="N-linked (GlcNAc...) asparagine" evidence="2">
    <location>
        <position position="80"/>
    </location>
</feature>
<feature type="glycosylation site" id="CAR_000039" description="N-linked (GlcNAc...) asparagine" evidence="2">
    <location>
        <position position="106"/>
    </location>
</feature>
<feature type="disulfide bond" evidence="1">
    <location>
        <begin position="35"/>
        <end position="59"/>
    </location>
</feature>
<feature type="disulfide bond" evidence="1">
    <location>
        <begin position="38"/>
        <end position="88"/>
    </location>
</feature>
<feature type="disulfide bond" evidence="1">
    <location>
        <begin position="56"/>
        <end position="110"/>
    </location>
</feature>
<feature type="disulfide bond" evidence="1">
    <location>
        <begin position="60"/>
        <end position="112"/>
    </location>
</feature>
<feature type="disulfide bond" evidence="1">
    <location>
        <begin position="87"/>
        <end position="115"/>
    </location>
</feature>
<feature type="sequence conflict" description="In Ref. 2; AA sequence." evidence="7" ref="2">
    <original>D</original>
    <variation>N</variation>
    <location>
        <position position="27"/>
    </location>
</feature>
<feature type="sequence conflict" description="In Ref. 2; AA sequence." evidence="7" ref="2">
    <original>E</original>
    <variation>Q</variation>
    <location>
        <position position="29"/>
    </location>
</feature>
<feature type="sequence conflict" description="In Ref. 2; AA sequence, 3; AA sequence and 4; AA sequence." evidence="7" ref="2 3 4">
    <original>E</original>
    <variation>Q</variation>
    <location>
        <position position="37"/>
    </location>
</feature>
<feature type="sequence conflict" description="In Ref. 3; AA sequence." evidence="7" ref="3">
    <original>CS</original>
    <variation>SC</variation>
    <location>
        <begin position="112"/>
        <end position="113"/>
    </location>
</feature>
<evidence type="ECO:0000250" key="1">
    <source>
        <dbReference type="UniProtKB" id="P01215"/>
    </source>
</evidence>
<evidence type="ECO:0000269" key="2">
    <source>
    </source>
</evidence>
<evidence type="ECO:0000269" key="3">
    <source>
    </source>
</evidence>
<evidence type="ECO:0000269" key="4">
    <source>
    </source>
</evidence>
<evidence type="ECO:0000269" key="5">
    <source>
    </source>
</evidence>
<evidence type="ECO:0000269" key="6">
    <source>
    </source>
</evidence>
<evidence type="ECO:0000305" key="7"/>
<protein>
    <recommendedName>
        <fullName>Glycoprotein hormones alpha chain</fullName>
    </recommendedName>
    <alternativeName>
        <fullName>Anterior pituitary glycoprotein hormones common subunit alpha</fullName>
    </alternativeName>
    <alternativeName>
        <fullName>Follicle-stimulating hormone alpha chain</fullName>
        <shortName>FSH-alpha</shortName>
    </alternativeName>
    <alternativeName>
        <fullName>Follitropin alpha chain</fullName>
    </alternativeName>
    <alternativeName>
        <fullName>LH alpha 3</fullName>
    </alternativeName>
    <alternativeName>
        <fullName>Luteinizing hormone alpha chain</fullName>
        <shortName>LSH-alpha</shortName>
    </alternativeName>
    <alternativeName>
        <fullName>Lutropin alpha chain</fullName>
    </alternativeName>
    <alternativeName>
        <fullName>Thyroid-stimulating hormone alpha chain</fullName>
        <shortName>TSH-alpha</shortName>
    </alternativeName>
    <alternativeName>
        <fullName>Thyrotropin alpha chain</fullName>
    </alternativeName>
    <component>
        <recommendedName>
            <fullName>LH alpha 1-1</fullName>
        </recommendedName>
    </component>
    <component>
        <recommendedName>
            <fullName>LH alpha 1-2</fullName>
        </recommendedName>
    </component>
    <component>
        <recommendedName>
            <fullName>LH alpha 1-3</fullName>
        </recommendedName>
    </component>
</protein>
<reference key="1">
    <citation type="journal article" date="1989" name="Nucleic Acids Res.">
        <title>Cloning and DNA sequence analysis of the cDNA for the common alpha-subunit of the ovine pituitary glycoprotein hormones.</title>
        <authorList>
            <person name="Bello P.A."/>
            <person name="Mountford P.S."/>
            <person name="Brandon M.R."/>
            <person name="Adams T.E."/>
        </authorList>
    </citation>
    <scope>NUCLEOTIDE SEQUENCE [MRNA]</scope>
</reference>
<reference key="2">
    <citation type="journal article" date="1972" name="J. Biol. Chem.">
        <title>The primary structure of ovine luteinizing hormone. I. The amino acid sequence of the reduced and S-aminoethylated S-subunit (LH-alpha).</title>
        <authorList>
            <person name="Liu W.-K."/>
            <person name="Nahm H.S."/>
            <person name="Sweeney C.M."/>
            <person name="Lamkin W.M."/>
            <person name="Baker H.N."/>
            <person name="Ward D.N."/>
        </authorList>
    </citation>
    <scope>PROTEIN SEQUENCE OF 25-120</scope>
</reference>
<reference key="3">
    <citation type="journal article" date="1972" name="Arch. Biochem. Biophys.">
        <title>The primary structure of ovine interstitial cell-stimulating hormone. I. The alpha-subunit.</title>
        <authorList>
            <person name="Sairam M.R."/>
            <person name="Papkoff H."/>
            <person name="Li C.H."/>
        </authorList>
    </citation>
    <scope>PROTEIN SEQUENCE OF 25-120</scope>
</reference>
<reference key="4">
    <citation type="journal article" date="1981" name="Biochem. J.">
        <title>Primary structure of the ovine pituitary follitropin alpha-subunit.</title>
        <authorList>
            <person name="Sairam M.R."/>
        </authorList>
    </citation>
    <scope>PROTEIN SEQUENCE OF 25-120</scope>
</reference>
<reference key="5">
    <citation type="journal article" date="1988" name="Endocrinology">
        <title>Renotropic activity in ovine luteinizing hormone isoform(s).</title>
        <authorList>
            <person name="Nomura K."/>
            <person name="Tsunasawa S."/>
            <person name="Ohmura K."/>
            <person name="Sakiyama F."/>
            <person name="Shizume K."/>
        </authorList>
    </citation>
    <scope>PROTEIN SEQUENCE OF 25-41</scope>
    <scope>FUNCTION</scope>
    <scope>SUBUNIT</scope>
</reference>
<reference key="6">
    <citation type="journal article" date="1973" name="Arch. Biochem. Biophys.">
        <title>The primary structure of ovine interstitial cell-stimulating hormone. III. Disulfide bridges of the alpha-subunit.</title>
        <authorList>
            <person name="Chung D."/>
            <person name="Sairam M.R."/>
            <person name="Li C.H."/>
        </authorList>
    </citation>
    <scope>PRELIMINARY ASSIGNMENT OF DISULFIDE BONDS</scope>
</reference>
<reference key="7">
    <citation type="journal article" date="1990" name="Eur. J. Biochem.">
        <title>Site-specific N-glycosylation of ovine lutropin. Structural analysis by one- and two-dimensional 1H-NMR spectroscopy.</title>
        <authorList>
            <person name="Weisshaar G."/>
            <person name="Hiyama J."/>
            <person name="Renwick A.G.C."/>
        </authorList>
    </citation>
    <scope>STRUCTURE OF CARBOHYDRATES</scope>
    <scope>GLYCOSYLATION AT ASN-80 AND ASN-106</scope>
</reference>
<gene>
    <name type="primary">CGA</name>
</gene>
<keyword id="KW-0903">Direct protein sequencing</keyword>
<keyword id="KW-1015">Disulfide bond</keyword>
<keyword id="KW-0325">Glycoprotein</keyword>
<keyword id="KW-0372">Hormone</keyword>
<keyword id="KW-1185">Reference proteome</keyword>
<keyword id="KW-0964">Secreted</keyword>
<keyword id="KW-0732">Signal</keyword>
<accession>P01218</accession>
<comment type="function">
    <text evidence="1">Shared alpha chain of the active heterodimeric glycoprotein hormones thyrotropin/thyroid stimulating hormone/TSH, lutropin/luteinizing hormone/LH and follitropin/follicle stimulating hormone/FSH. These hormones bind specific receptors on target cells that in turn activate downstream signaling pathways.</text>
</comment>
<comment type="subunit">
    <text evidence="1 3">Heterodimer. The active hormones thyrotropin, lutropin and follitropin are heterodimers composed of CGA, a common alpha chain described here and a unique beta chain which confers their biological specificity to the hormones: TSHB for thyrotropin, LHB for lutropin and FSHB for follitropin (By similarity). The alpha chain can also be formed by LH alpha 1-1, LH alpha 1-2 and LH alpha 1-3.</text>
</comment>
<comment type="subcellular location">
    <subcellularLocation>
        <location evidence="1">Secreted</location>
    </subcellularLocation>
</comment>
<comment type="similarity">
    <text evidence="7">Belongs to the glycoprotein hormones subunit alpha family.</text>
</comment>
<organism>
    <name type="scientific">Ovis aries</name>
    <name type="common">Sheep</name>
    <dbReference type="NCBI Taxonomy" id="9940"/>
    <lineage>
        <taxon>Eukaryota</taxon>
        <taxon>Metazoa</taxon>
        <taxon>Chordata</taxon>
        <taxon>Craniata</taxon>
        <taxon>Vertebrata</taxon>
        <taxon>Euteleostomi</taxon>
        <taxon>Mammalia</taxon>
        <taxon>Eutheria</taxon>
        <taxon>Laurasiatheria</taxon>
        <taxon>Artiodactyla</taxon>
        <taxon>Ruminantia</taxon>
        <taxon>Pecora</taxon>
        <taxon>Bovidae</taxon>
        <taxon>Caprinae</taxon>
        <taxon>Ovis</taxon>
    </lineage>
</organism>
<dbReference type="EMBL" id="X16977">
    <property type="protein sequence ID" value="CAA34848.1"/>
    <property type="molecule type" value="mRNA"/>
</dbReference>
<dbReference type="PIR" id="S06935">
    <property type="entry name" value="UTSHA"/>
</dbReference>
<dbReference type="RefSeq" id="NP_001009464.1">
    <property type="nucleotide sequence ID" value="NM_001009464.1"/>
</dbReference>
<dbReference type="SMR" id="P01218"/>
<dbReference type="STRING" id="9940.ENSOARP00000014092"/>
<dbReference type="GlyConnect" id="195">
    <property type="glycosylation" value="9 N-Linked glycans (2 sites)"/>
</dbReference>
<dbReference type="GlyConnect" id="348">
    <property type="glycosylation" value="3 N-Linked glycans"/>
</dbReference>
<dbReference type="GlyCosmos" id="P01218">
    <property type="glycosylation" value="2 sites, 17 glycans"/>
</dbReference>
<dbReference type="PaxDb" id="9940-ENSOARP00000014092"/>
<dbReference type="Ensembl" id="ENSOART00185015921">
    <property type="protein sequence ID" value="ENSOARP00185007821"/>
    <property type="gene ID" value="ENSOARG00185009777"/>
</dbReference>
<dbReference type="Ensembl" id="ENSOART00215069605">
    <property type="protein sequence ID" value="ENSOARP00215037287"/>
    <property type="gene ID" value="ENSOARG00215041225"/>
</dbReference>
<dbReference type="Ensembl" id="ENSOART00220079776">
    <property type="protein sequence ID" value="ENSOARP00220042795"/>
    <property type="gene ID" value="ENSOARG00220048008"/>
</dbReference>
<dbReference type="Ensembl" id="ENSOART00225079295">
    <property type="protein sequence ID" value="ENSOARP00225041003"/>
    <property type="gene ID" value="ENSOARG00225047725"/>
</dbReference>
<dbReference type="Ensembl" id="ENSOART00260026408">
    <property type="protein sequence ID" value="ENSOARP00260013276"/>
    <property type="gene ID" value="ENSOARG00260016313"/>
</dbReference>
<dbReference type="GeneID" id="443538"/>
<dbReference type="KEGG" id="oas:443538"/>
<dbReference type="CTD" id="1081"/>
<dbReference type="eggNOG" id="ENOG502S1PK">
    <property type="taxonomic scope" value="Eukaryota"/>
</dbReference>
<dbReference type="HOGENOM" id="CLU_148106_0_0_1"/>
<dbReference type="OMA" id="VKNHTDC"/>
<dbReference type="OrthoDB" id="9852859at2759"/>
<dbReference type="Proteomes" id="UP000002356">
    <property type="component" value="Chromosome 8"/>
</dbReference>
<dbReference type="Bgee" id="ENSOARG00000013153">
    <property type="expression patterns" value="Expressed in pituitary gland and 12 other cell types or tissues"/>
</dbReference>
<dbReference type="GO" id="GO:0005615">
    <property type="term" value="C:extracellular space"/>
    <property type="evidence" value="ECO:0000250"/>
    <property type="project" value="UniProtKB"/>
</dbReference>
<dbReference type="GO" id="GO:0016914">
    <property type="term" value="C:follicle-stimulating hormone complex"/>
    <property type="evidence" value="ECO:0000250"/>
    <property type="project" value="UniProtKB"/>
</dbReference>
<dbReference type="GO" id="GO:0016913">
    <property type="term" value="F:follicle-stimulating hormone activity"/>
    <property type="evidence" value="ECO:0000250"/>
    <property type="project" value="UniProtKB"/>
</dbReference>
<dbReference type="GO" id="GO:0007186">
    <property type="term" value="P:G protein-coupled receptor signaling pathway"/>
    <property type="evidence" value="ECO:0000250"/>
    <property type="project" value="UniProtKB"/>
</dbReference>
<dbReference type="GO" id="GO:0010893">
    <property type="term" value="P:positive regulation of steroid biosynthetic process"/>
    <property type="evidence" value="ECO:0000250"/>
    <property type="project" value="UniProtKB"/>
</dbReference>
<dbReference type="GO" id="GO:0010469">
    <property type="term" value="P:regulation of signaling receptor activity"/>
    <property type="evidence" value="ECO:0000250"/>
    <property type="project" value="UniProtKB"/>
</dbReference>
<dbReference type="GO" id="GO:0006590">
    <property type="term" value="P:thyroid hormone generation"/>
    <property type="evidence" value="ECO:0007669"/>
    <property type="project" value="TreeGrafter"/>
</dbReference>
<dbReference type="FunFam" id="2.10.90.10:FF:000011">
    <property type="entry name" value="Glycoprotein hormones alpha chain"/>
    <property type="match status" value="1"/>
</dbReference>
<dbReference type="Gene3D" id="2.10.90.10">
    <property type="entry name" value="Cystine-knot cytokines"/>
    <property type="match status" value="1"/>
</dbReference>
<dbReference type="InterPro" id="IPR029034">
    <property type="entry name" value="Cystine-knot_cytokine"/>
</dbReference>
<dbReference type="InterPro" id="IPR000476">
    <property type="entry name" value="Glyco_hormone"/>
</dbReference>
<dbReference type="PANTHER" id="PTHR11509">
    <property type="entry name" value="GLYCOPROTEIN HORMONE ALPHA CHAIN"/>
    <property type="match status" value="1"/>
</dbReference>
<dbReference type="PANTHER" id="PTHR11509:SF0">
    <property type="entry name" value="GLYCOPROTEIN HORMONES ALPHA CHAIN"/>
    <property type="match status" value="1"/>
</dbReference>
<dbReference type="Pfam" id="PF00236">
    <property type="entry name" value="Hormone_6"/>
    <property type="match status" value="1"/>
</dbReference>
<dbReference type="PRINTS" id="PR00274">
    <property type="entry name" value="GLYCOHORMONE"/>
</dbReference>
<dbReference type="SMART" id="SM00067">
    <property type="entry name" value="GHA"/>
    <property type="match status" value="1"/>
</dbReference>
<dbReference type="SUPFAM" id="SSF57501">
    <property type="entry name" value="Cystine-knot cytokines"/>
    <property type="match status" value="1"/>
</dbReference>
<dbReference type="PROSITE" id="PS00779">
    <property type="entry name" value="GLYCO_HORMONE_ALPHA_1"/>
    <property type="match status" value="1"/>
</dbReference>
<dbReference type="PROSITE" id="PS00780">
    <property type="entry name" value="GLYCO_HORMONE_ALPHA_2"/>
    <property type="match status" value="1"/>
</dbReference>
<dbReference type="PROSITE" id="PS50277">
    <property type="entry name" value="GLYCO_HORMONE_ALPHA_3"/>
    <property type="match status" value="1"/>
</dbReference>
<sequence length="120" mass="13588">MDYYRKYAAAILAILSLFLQILHSFPDGEFTMQGCPECKLKENKYFSKPDAPIYQCMGCCFSRAYPTPARSKKTMLVPKNITSEATCCVAKAFTKATVMGNVRVENHTECHCSTCYYHKS</sequence>
<name>GLHA_SHEEP</name>